<comment type="function">
    <text evidence="1">Attaches a formyl group to the free amino group of methionyl-tRNA(fMet). The formyl group appears to play a dual role in the initiator identity of N-formylmethionyl-tRNA by promoting its recognition by IF2 and preventing the misappropriation of this tRNA by the elongation apparatus.</text>
</comment>
<comment type="catalytic activity">
    <reaction evidence="1">
        <text>L-methionyl-tRNA(fMet) + (6R)-10-formyltetrahydrofolate = N-formyl-L-methionyl-tRNA(fMet) + (6S)-5,6,7,8-tetrahydrofolate + H(+)</text>
        <dbReference type="Rhea" id="RHEA:24380"/>
        <dbReference type="Rhea" id="RHEA-COMP:9952"/>
        <dbReference type="Rhea" id="RHEA-COMP:9953"/>
        <dbReference type="ChEBI" id="CHEBI:15378"/>
        <dbReference type="ChEBI" id="CHEBI:57453"/>
        <dbReference type="ChEBI" id="CHEBI:78530"/>
        <dbReference type="ChEBI" id="CHEBI:78844"/>
        <dbReference type="ChEBI" id="CHEBI:195366"/>
        <dbReference type="EC" id="2.1.2.9"/>
    </reaction>
</comment>
<comment type="similarity">
    <text evidence="1">Belongs to the Fmt family.</text>
</comment>
<feature type="chain" id="PRO_1000098436" description="Methionyl-tRNA formyltransferase">
    <location>
        <begin position="1"/>
        <end position="315"/>
    </location>
</feature>
<feature type="binding site" evidence="1">
    <location>
        <begin position="113"/>
        <end position="116"/>
    </location>
    <ligand>
        <name>(6S)-5,6,7,8-tetrahydrofolate</name>
        <dbReference type="ChEBI" id="CHEBI:57453"/>
    </ligand>
</feature>
<gene>
    <name evidence="1" type="primary">fmt</name>
    <name type="ordered locus">SeD_A3774</name>
</gene>
<sequence length="315" mass="33990">MSDSLRIIFAGTPDFAARHLDALLTSGHNVVGVFTQPDRPAGRGKKLMPSPVKVLAEEKGLPVFQPVSLRPQENQQLVADLHADVMVVVAYGLILPKAVLDMPRLGCINVHGSLLPRWRGAAPIQRSLWAGDAETGVTIMQMDVGLDTGDMLYKLACPITAEDTSGSLYNKLAELGPQGLITTLKQLADGTAAPEAQNEALVTHAEKLSKEEARIDWSLSAAQLERCIRAFNPWPMSWLEIDGQPVKVWQASVIEDATQSLPGTILAATKQGIQVATGKGILNLLSLQPAGKKAMSAQDLLNSRREWFIPGNRLA</sequence>
<protein>
    <recommendedName>
        <fullName evidence="1">Methionyl-tRNA formyltransferase</fullName>
        <ecNumber evidence="1">2.1.2.9</ecNumber>
    </recommendedName>
</protein>
<proteinExistence type="inferred from homology"/>
<accession>B5FJI3</accession>
<dbReference type="EC" id="2.1.2.9" evidence="1"/>
<dbReference type="EMBL" id="CP001144">
    <property type="protein sequence ID" value="ACH77845.1"/>
    <property type="molecule type" value="Genomic_DNA"/>
</dbReference>
<dbReference type="RefSeq" id="WP_001285171.1">
    <property type="nucleotide sequence ID" value="NC_011205.1"/>
</dbReference>
<dbReference type="SMR" id="B5FJI3"/>
<dbReference type="KEGG" id="sed:SeD_A3774"/>
<dbReference type="HOGENOM" id="CLU_033347_1_2_6"/>
<dbReference type="Proteomes" id="UP000008322">
    <property type="component" value="Chromosome"/>
</dbReference>
<dbReference type="GO" id="GO:0005829">
    <property type="term" value="C:cytosol"/>
    <property type="evidence" value="ECO:0007669"/>
    <property type="project" value="TreeGrafter"/>
</dbReference>
<dbReference type="GO" id="GO:0004479">
    <property type="term" value="F:methionyl-tRNA formyltransferase activity"/>
    <property type="evidence" value="ECO:0007669"/>
    <property type="project" value="UniProtKB-UniRule"/>
</dbReference>
<dbReference type="CDD" id="cd08646">
    <property type="entry name" value="FMT_core_Met-tRNA-FMT_N"/>
    <property type="match status" value="1"/>
</dbReference>
<dbReference type="CDD" id="cd08704">
    <property type="entry name" value="Met_tRNA_FMT_C"/>
    <property type="match status" value="1"/>
</dbReference>
<dbReference type="FunFam" id="3.10.25.10:FF:000001">
    <property type="entry name" value="Methionyl-tRNA formyltransferase"/>
    <property type="match status" value="1"/>
</dbReference>
<dbReference type="FunFam" id="3.40.50.170:FF:000003">
    <property type="entry name" value="Methionyl-tRNA formyltransferase"/>
    <property type="match status" value="1"/>
</dbReference>
<dbReference type="Gene3D" id="3.10.25.10">
    <property type="entry name" value="Formyl transferase, C-terminal domain"/>
    <property type="match status" value="1"/>
</dbReference>
<dbReference type="Gene3D" id="3.40.50.170">
    <property type="entry name" value="Formyl transferase, N-terminal domain"/>
    <property type="match status" value="1"/>
</dbReference>
<dbReference type="HAMAP" id="MF_00182">
    <property type="entry name" value="Formyl_trans"/>
    <property type="match status" value="1"/>
</dbReference>
<dbReference type="InterPro" id="IPR005794">
    <property type="entry name" value="Fmt"/>
</dbReference>
<dbReference type="InterPro" id="IPR005793">
    <property type="entry name" value="Formyl_trans_C"/>
</dbReference>
<dbReference type="InterPro" id="IPR037022">
    <property type="entry name" value="Formyl_trans_C_sf"/>
</dbReference>
<dbReference type="InterPro" id="IPR002376">
    <property type="entry name" value="Formyl_transf_N"/>
</dbReference>
<dbReference type="InterPro" id="IPR036477">
    <property type="entry name" value="Formyl_transf_N_sf"/>
</dbReference>
<dbReference type="InterPro" id="IPR011034">
    <property type="entry name" value="Formyl_transferase-like_C_sf"/>
</dbReference>
<dbReference type="InterPro" id="IPR001555">
    <property type="entry name" value="GART_AS"/>
</dbReference>
<dbReference type="InterPro" id="IPR044135">
    <property type="entry name" value="Met-tRNA-FMT_C"/>
</dbReference>
<dbReference type="InterPro" id="IPR041711">
    <property type="entry name" value="Met-tRNA-FMT_N"/>
</dbReference>
<dbReference type="NCBIfam" id="TIGR00460">
    <property type="entry name" value="fmt"/>
    <property type="match status" value="1"/>
</dbReference>
<dbReference type="PANTHER" id="PTHR11138">
    <property type="entry name" value="METHIONYL-TRNA FORMYLTRANSFERASE"/>
    <property type="match status" value="1"/>
</dbReference>
<dbReference type="PANTHER" id="PTHR11138:SF5">
    <property type="entry name" value="METHIONYL-TRNA FORMYLTRANSFERASE, MITOCHONDRIAL"/>
    <property type="match status" value="1"/>
</dbReference>
<dbReference type="Pfam" id="PF02911">
    <property type="entry name" value="Formyl_trans_C"/>
    <property type="match status" value="1"/>
</dbReference>
<dbReference type="Pfam" id="PF00551">
    <property type="entry name" value="Formyl_trans_N"/>
    <property type="match status" value="1"/>
</dbReference>
<dbReference type="SUPFAM" id="SSF50486">
    <property type="entry name" value="FMT C-terminal domain-like"/>
    <property type="match status" value="1"/>
</dbReference>
<dbReference type="SUPFAM" id="SSF53328">
    <property type="entry name" value="Formyltransferase"/>
    <property type="match status" value="1"/>
</dbReference>
<dbReference type="PROSITE" id="PS00373">
    <property type="entry name" value="GART"/>
    <property type="match status" value="1"/>
</dbReference>
<organism>
    <name type="scientific">Salmonella dublin (strain CT_02021853)</name>
    <dbReference type="NCBI Taxonomy" id="439851"/>
    <lineage>
        <taxon>Bacteria</taxon>
        <taxon>Pseudomonadati</taxon>
        <taxon>Pseudomonadota</taxon>
        <taxon>Gammaproteobacteria</taxon>
        <taxon>Enterobacterales</taxon>
        <taxon>Enterobacteriaceae</taxon>
        <taxon>Salmonella</taxon>
    </lineage>
</organism>
<evidence type="ECO:0000255" key="1">
    <source>
        <dbReference type="HAMAP-Rule" id="MF_00182"/>
    </source>
</evidence>
<keyword id="KW-0648">Protein biosynthesis</keyword>
<keyword id="KW-0808">Transferase</keyword>
<reference key="1">
    <citation type="journal article" date="2011" name="J. Bacteriol.">
        <title>Comparative genomics of 28 Salmonella enterica isolates: evidence for CRISPR-mediated adaptive sublineage evolution.</title>
        <authorList>
            <person name="Fricke W.F."/>
            <person name="Mammel M.K."/>
            <person name="McDermott P.F."/>
            <person name="Tartera C."/>
            <person name="White D.G."/>
            <person name="Leclerc J.E."/>
            <person name="Ravel J."/>
            <person name="Cebula T.A."/>
        </authorList>
    </citation>
    <scope>NUCLEOTIDE SEQUENCE [LARGE SCALE GENOMIC DNA]</scope>
    <source>
        <strain>CT_02021853</strain>
    </source>
</reference>
<name>FMT_SALDC</name>